<feature type="chain" id="PRO_1000021531" description="Hydroxyethylthiazole kinase">
    <location>
        <begin position="1"/>
        <end position="263"/>
    </location>
</feature>
<feature type="binding site" evidence="1">
    <location>
        <position position="39"/>
    </location>
    <ligand>
        <name>substrate</name>
    </ligand>
</feature>
<feature type="binding site" evidence="1">
    <location>
        <position position="115"/>
    </location>
    <ligand>
        <name>ATP</name>
        <dbReference type="ChEBI" id="CHEBI:30616"/>
    </ligand>
</feature>
<feature type="binding site" evidence="1">
    <location>
        <position position="160"/>
    </location>
    <ligand>
        <name>ATP</name>
        <dbReference type="ChEBI" id="CHEBI:30616"/>
    </ligand>
</feature>
<feature type="binding site" evidence="1">
    <location>
        <position position="187"/>
    </location>
    <ligand>
        <name>substrate</name>
    </ligand>
</feature>
<name>THIM_STAA1</name>
<sequence length="263" mass="28067">MNYLNKIRIENPLTICYTNDVVKNFTANGLLSIGASPAMSEAPEEAEEFYKVAQALLINIGTLTAQNEQDIIAIAQTANEAGLPIVFDPVAVGASTYRKQFCKLLLKSAKVSVIKGNASEILALIDDTATMKGTDSDANLDAVAIAKKAYAIYKTAIVITGKEDVIVQDNKAIVLANGSPLLARVTGAGCLLGGVIAGFLFRETEPDIEALIEAVSVFNIAAEVAAENENCGGPGTFSPLLLDTLYHLNETTYQQRIRIQEVE</sequence>
<reference key="1">
    <citation type="journal article" date="2008" name="Antimicrob. Agents Chemother.">
        <title>Mutated response regulator graR is responsible for phenotypic conversion of Staphylococcus aureus from heterogeneous vancomycin-intermediate resistance to vancomycin-intermediate resistance.</title>
        <authorList>
            <person name="Neoh H.-M."/>
            <person name="Cui L."/>
            <person name="Yuzawa H."/>
            <person name="Takeuchi F."/>
            <person name="Matsuo M."/>
            <person name="Hiramatsu K."/>
        </authorList>
    </citation>
    <scope>NUCLEOTIDE SEQUENCE [LARGE SCALE GENOMIC DNA]</scope>
    <source>
        <strain>Mu3 / ATCC 700698</strain>
    </source>
</reference>
<proteinExistence type="inferred from homology"/>
<keyword id="KW-0067">ATP-binding</keyword>
<keyword id="KW-0418">Kinase</keyword>
<keyword id="KW-0460">Magnesium</keyword>
<keyword id="KW-0479">Metal-binding</keyword>
<keyword id="KW-0547">Nucleotide-binding</keyword>
<keyword id="KW-0784">Thiamine biosynthesis</keyword>
<keyword id="KW-0808">Transferase</keyword>
<dbReference type="EC" id="2.7.1.50" evidence="1"/>
<dbReference type="EMBL" id="AP009324">
    <property type="protein sequence ID" value="BAF78960.1"/>
    <property type="molecule type" value="Genomic_DNA"/>
</dbReference>
<dbReference type="RefSeq" id="WP_001108483.1">
    <property type="nucleotide sequence ID" value="NC_009782.1"/>
</dbReference>
<dbReference type="SMR" id="A7X4S9"/>
<dbReference type="KEGG" id="saw:SAHV_2077"/>
<dbReference type="HOGENOM" id="CLU_019943_0_2_9"/>
<dbReference type="UniPathway" id="UPA00060">
    <property type="reaction ID" value="UER00139"/>
</dbReference>
<dbReference type="GO" id="GO:0005524">
    <property type="term" value="F:ATP binding"/>
    <property type="evidence" value="ECO:0007669"/>
    <property type="project" value="UniProtKB-UniRule"/>
</dbReference>
<dbReference type="GO" id="GO:0004417">
    <property type="term" value="F:hydroxyethylthiazole kinase activity"/>
    <property type="evidence" value="ECO:0007669"/>
    <property type="project" value="UniProtKB-UniRule"/>
</dbReference>
<dbReference type="GO" id="GO:0000287">
    <property type="term" value="F:magnesium ion binding"/>
    <property type="evidence" value="ECO:0007669"/>
    <property type="project" value="UniProtKB-UniRule"/>
</dbReference>
<dbReference type="GO" id="GO:0009228">
    <property type="term" value="P:thiamine biosynthetic process"/>
    <property type="evidence" value="ECO:0007669"/>
    <property type="project" value="UniProtKB-KW"/>
</dbReference>
<dbReference type="GO" id="GO:0009229">
    <property type="term" value="P:thiamine diphosphate biosynthetic process"/>
    <property type="evidence" value="ECO:0007669"/>
    <property type="project" value="UniProtKB-UniRule"/>
</dbReference>
<dbReference type="CDD" id="cd01170">
    <property type="entry name" value="THZ_kinase"/>
    <property type="match status" value="1"/>
</dbReference>
<dbReference type="Gene3D" id="3.40.1190.20">
    <property type="match status" value="1"/>
</dbReference>
<dbReference type="HAMAP" id="MF_00228">
    <property type="entry name" value="Thz_kinase"/>
    <property type="match status" value="1"/>
</dbReference>
<dbReference type="InterPro" id="IPR000417">
    <property type="entry name" value="Hyethyz_kinase"/>
</dbReference>
<dbReference type="InterPro" id="IPR029056">
    <property type="entry name" value="Ribokinase-like"/>
</dbReference>
<dbReference type="NCBIfam" id="NF006830">
    <property type="entry name" value="PRK09355.1"/>
    <property type="match status" value="1"/>
</dbReference>
<dbReference type="Pfam" id="PF02110">
    <property type="entry name" value="HK"/>
    <property type="match status" value="1"/>
</dbReference>
<dbReference type="PIRSF" id="PIRSF000513">
    <property type="entry name" value="Thz_kinase"/>
    <property type="match status" value="1"/>
</dbReference>
<dbReference type="PRINTS" id="PR01099">
    <property type="entry name" value="HYETHTZKNASE"/>
</dbReference>
<dbReference type="SUPFAM" id="SSF53613">
    <property type="entry name" value="Ribokinase-like"/>
    <property type="match status" value="1"/>
</dbReference>
<protein>
    <recommendedName>
        <fullName evidence="1">Hydroxyethylthiazole kinase</fullName>
        <ecNumber evidence="1">2.7.1.50</ecNumber>
    </recommendedName>
    <alternativeName>
        <fullName evidence="1">4-methyl-5-beta-hydroxyethylthiazole kinase</fullName>
        <shortName evidence="1">TH kinase</shortName>
        <shortName evidence="1">Thz kinase</shortName>
    </alternativeName>
</protein>
<evidence type="ECO:0000255" key="1">
    <source>
        <dbReference type="HAMAP-Rule" id="MF_00228"/>
    </source>
</evidence>
<comment type="function">
    <text evidence="1">Catalyzes the phosphorylation of the hydroxyl group of 4-methyl-5-beta-hydroxyethylthiazole (THZ).</text>
</comment>
<comment type="catalytic activity">
    <reaction evidence="1">
        <text>5-(2-hydroxyethyl)-4-methylthiazole + ATP = 4-methyl-5-(2-phosphooxyethyl)-thiazole + ADP + H(+)</text>
        <dbReference type="Rhea" id="RHEA:24212"/>
        <dbReference type="ChEBI" id="CHEBI:15378"/>
        <dbReference type="ChEBI" id="CHEBI:17957"/>
        <dbReference type="ChEBI" id="CHEBI:30616"/>
        <dbReference type="ChEBI" id="CHEBI:58296"/>
        <dbReference type="ChEBI" id="CHEBI:456216"/>
        <dbReference type="EC" id="2.7.1.50"/>
    </reaction>
</comment>
<comment type="cofactor">
    <cofactor evidence="1">
        <name>Mg(2+)</name>
        <dbReference type="ChEBI" id="CHEBI:18420"/>
    </cofactor>
</comment>
<comment type="pathway">
    <text evidence="1">Cofactor biosynthesis; thiamine diphosphate biosynthesis; 4-methyl-5-(2-phosphoethyl)-thiazole from 5-(2-hydroxyethyl)-4-methylthiazole: step 1/1.</text>
</comment>
<comment type="similarity">
    <text evidence="1">Belongs to the Thz kinase family.</text>
</comment>
<accession>A7X4S9</accession>
<gene>
    <name evidence="1" type="primary">thiM</name>
    <name type="ordered locus">SAHV_2077</name>
</gene>
<organism>
    <name type="scientific">Staphylococcus aureus (strain Mu3 / ATCC 700698)</name>
    <dbReference type="NCBI Taxonomy" id="418127"/>
    <lineage>
        <taxon>Bacteria</taxon>
        <taxon>Bacillati</taxon>
        <taxon>Bacillota</taxon>
        <taxon>Bacilli</taxon>
        <taxon>Bacillales</taxon>
        <taxon>Staphylococcaceae</taxon>
        <taxon>Staphylococcus</taxon>
    </lineage>
</organism>